<keyword id="KW-1185">Reference proteome</keyword>
<sequence length="64" mass="7126">MDDKVETGNIDVRLLELLVCPLTKGPLEYDAERSELVSRKARLAYPVRGGIPIMLPSEARSLTE</sequence>
<evidence type="ECO:0000255" key="1">
    <source>
        <dbReference type="HAMAP-Rule" id="MF_01187"/>
    </source>
</evidence>
<organism>
    <name type="scientific">Brucella abortus (strain 2308)</name>
    <dbReference type="NCBI Taxonomy" id="359391"/>
    <lineage>
        <taxon>Bacteria</taxon>
        <taxon>Pseudomonadati</taxon>
        <taxon>Pseudomonadota</taxon>
        <taxon>Alphaproteobacteria</taxon>
        <taxon>Hyphomicrobiales</taxon>
        <taxon>Brucellaceae</taxon>
        <taxon>Brucella/Ochrobactrum group</taxon>
        <taxon>Brucella</taxon>
    </lineage>
</organism>
<reference key="1">
    <citation type="journal article" date="2005" name="Infect. Immun.">
        <title>Whole-genome analyses of speciation events in pathogenic Brucellae.</title>
        <authorList>
            <person name="Chain P.S."/>
            <person name="Comerci D.J."/>
            <person name="Tolmasky M.E."/>
            <person name="Larimer F.W."/>
            <person name="Malfatti S.A."/>
            <person name="Vergez L.M."/>
            <person name="Aguero F."/>
            <person name="Land M.L."/>
            <person name="Ugalde R.A."/>
            <person name="Garcia E."/>
        </authorList>
    </citation>
    <scope>NUCLEOTIDE SEQUENCE [LARGE SCALE GENOMIC DNA]</scope>
    <source>
        <strain>2308</strain>
    </source>
</reference>
<protein>
    <recommendedName>
        <fullName evidence="1">UPF0434 protein BAB2_0345</fullName>
    </recommendedName>
</protein>
<feature type="chain" id="PRO_0000291068" description="UPF0434 protein BAB2_0345">
    <location>
        <begin position="1"/>
        <end position="64"/>
    </location>
</feature>
<proteinExistence type="inferred from homology"/>
<name>Y2845_BRUA2</name>
<gene>
    <name type="ordered locus">BAB2_0345</name>
</gene>
<accession>Q2YL59</accession>
<dbReference type="EMBL" id="AM040265">
    <property type="protein sequence ID" value="CAJ12511.1"/>
    <property type="molecule type" value="Genomic_DNA"/>
</dbReference>
<dbReference type="RefSeq" id="WP_002965755.1">
    <property type="nucleotide sequence ID" value="NZ_KN046823.1"/>
</dbReference>
<dbReference type="SMR" id="Q2YL59"/>
<dbReference type="STRING" id="359391.BAB2_0345"/>
<dbReference type="KEGG" id="bmf:BAB2_0345"/>
<dbReference type="PATRIC" id="fig|359391.11.peg.2298"/>
<dbReference type="HOGENOM" id="CLU_155659_2_2_5"/>
<dbReference type="Proteomes" id="UP000002719">
    <property type="component" value="Chromosome II"/>
</dbReference>
<dbReference type="GO" id="GO:0005829">
    <property type="term" value="C:cytosol"/>
    <property type="evidence" value="ECO:0007669"/>
    <property type="project" value="TreeGrafter"/>
</dbReference>
<dbReference type="FunFam" id="2.20.25.10:FF:000002">
    <property type="entry name" value="UPF0434 protein YcaR"/>
    <property type="match status" value="1"/>
</dbReference>
<dbReference type="Gene3D" id="2.20.25.10">
    <property type="match status" value="1"/>
</dbReference>
<dbReference type="HAMAP" id="MF_01187">
    <property type="entry name" value="UPF0434"/>
    <property type="match status" value="1"/>
</dbReference>
<dbReference type="InterPro" id="IPR005651">
    <property type="entry name" value="Trm112-like"/>
</dbReference>
<dbReference type="PANTHER" id="PTHR33505:SF4">
    <property type="entry name" value="PROTEIN PREY, MITOCHONDRIAL"/>
    <property type="match status" value="1"/>
</dbReference>
<dbReference type="PANTHER" id="PTHR33505">
    <property type="entry name" value="ZGC:162634"/>
    <property type="match status" value="1"/>
</dbReference>
<dbReference type="Pfam" id="PF03966">
    <property type="entry name" value="Trm112p"/>
    <property type="match status" value="1"/>
</dbReference>
<dbReference type="SUPFAM" id="SSF158997">
    <property type="entry name" value="Trm112p-like"/>
    <property type="match status" value="1"/>
</dbReference>
<comment type="similarity">
    <text evidence="1">Belongs to the UPF0434 family.</text>
</comment>